<name>GPDA_XANCP</name>
<proteinExistence type="inferred from homology"/>
<organism>
    <name type="scientific">Xanthomonas campestris pv. campestris (strain ATCC 33913 / DSM 3586 / NCPPB 528 / LMG 568 / P 25)</name>
    <dbReference type="NCBI Taxonomy" id="190485"/>
    <lineage>
        <taxon>Bacteria</taxon>
        <taxon>Pseudomonadati</taxon>
        <taxon>Pseudomonadota</taxon>
        <taxon>Gammaproteobacteria</taxon>
        <taxon>Lysobacterales</taxon>
        <taxon>Lysobacteraceae</taxon>
        <taxon>Xanthomonas</taxon>
    </lineage>
</organism>
<evidence type="ECO:0000255" key="1">
    <source>
        <dbReference type="HAMAP-Rule" id="MF_00394"/>
    </source>
</evidence>
<reference key="1">
    <citation type="journal article" date="2002" name="Nature">
        <title>Comparison of the genomes of two Xanthomonas pathogens with differing host specificities.</title>
        <authorList>
            <person name="da Silva A.C.R."/>
            <person name="Ferro J.A."/>
            <person name="Reinach F.C."/>
            <person name="Farah C.S."/>
            <person name="Furlan L.R."/>
            <person name="Quaggio R.B."/>
            <person name="Monteiro-Vitorello C.B."/>
            <person name="Van Sluys M.A."/>
            <person name="Almeida N.F. Jr."/>
            <person name="Alves L.M.C."/>
            <person name="do Amaral A.M."/>
            <person name="Bertolini M.C."/>
            <person name="Camargo L.E.A."/>
            <person name="Camarotte G."/>
            <person name="Cannavan F."/>
            <person name="Cardozo J."/>
            <person name="Chambergo F."/>
            <person name="Ciapina L.P."/>
            <person name="Cicarelli R.M.B."/>
            <person name="Coutinho L.L."/>
            <person name="Cursino-Santos J.R."/>
            <person name="El-Dorry H."/>
            <person name="Faria J.B."/>
            <person name="Ferreira A.J.S."/>
            <person name="Ferreira R.C.C."/>
            <person name="Ferro M.I.T."/>
            <person name="Formighieri E.F."/>
            <person name="Franco M.C."/>
            <person name="Greggio C.C."/>
            <person name="Gruber A."/>
            <person name="Katsuyama A.M."/>
            <person name="Kishi L.T."/>
            <person name="Leite R.P."/>
            <person name="Lemos E.G.M."/>
            <person name="Lemos M.V.F."/>
            <person name="Locali E.C."/>
            <person name="Machado M.A."/>
            <person name="Madeira A.M.B.N."/>
            <person name="Martinez-Rossi N.M."/>
            <person name="Martins E.C."/>
            <person name="Meidanis J."/>
            <person name="Menck C.F.M."/>
            <person name="Miyaki C.Y."/>
            <person name="Moon D.H."/>
            <person name="Moreira L.M."/>
            <person name="Novo M.T.M."/>
            <person name="Okura V.K."/>
            <person name="Oliveira M.C."/>
            <person name="Oliveira V.R."/>
            <person name="Pereira H.A."/>
            <person name="Rossi A."/>
            <person name="Sena J.A.D."/>
            <person name="Silva C."/>
            <person name="de Souza R.F."/>
            <person name="Spinola L.A.F."/>
            <person name="Takita M.A."/>
            <person name="Tamura R.E."/>
            <person name="Teixeira E.C."/>
            <person name="Tezza R.I.D."/>
            <person name="Trindade dos Santos M."/>
            <person name="Truffi D."/>
            <person name="Tsai S.M."/>
            <person name="White F.F."/>
            <person name="Setubal J.C."/>
            <person name="Kitajima J.P."/>
        </authorList>
    </citation>
    <scope>NUCLEOTIDE SEQUENCE [LARGE SCALE GENOMIC DNA]</scope>
    <source>
        <strain>ATCC 33913 / DSM 3586 / NCPPB 528 / LMG 568 / P 25</strain>
    </source>
</reference>
<keyword id="KW-0963">Cytoplasm</keyword>
<keyword id="KW-0444">Lipid biosynthesis</keyword>
<keyword id="KW-0443">Lipid metabolism</keyword>
<keyword id="KW-0520">NAD</keyword>
<keyword id="KW-0521">NADP</keyword>
<keyword id="KW-0547">Nucleotide-binding</keyword>
<keyword id="KW-0560">Oxidoreductase</keyword>
<keyword id="KW-0594">Phospholipid biosynthesis</keyword>
<keyword id="KW-1208">Phospholipid metabolism</keyword>
<keyword id="KW-1185">Reference proteome</keyword>
<protein>
    <recommendedName>
        <fullName evidence="1">Glycerol-3-phosphate dehydrogenase [NAD(P)+]</fullName>
        <ecNumber evidence="1">1.1.1.94</ecNumber>
    </recommendedName>
    <alternativeName>
        <fullName evidence="1">NAD(P)(+)-dependent glycerol-3-phosphate dehydrogenase</fullName>
    </alternativeName>
    <alternativeName>
        <fullName evidence="1">NAD(P)H-dependent dihydroxyacetone-phosphate reductase</fullName>
    </alternativeName>
</protein>
<comment type="function">
    <text evidence="1">Catalyzes the reduction of the glycolytic intermediate dihydroxyacetone phosphate (DHAP) to sn-glycerol 3-phosphate (G3P), the key precursor for phospholipid synthesis.</text>
</comment>
<comment type="catalytic activity">
    <reaction evidence="1">
        <text>sn-glycerol 3-phosphate + NAD(+) = dihydroxyacetone phosphate + NADH + H(+)</text>
        <dbReference type="Rhea" id="RHEA:11092"/>
        <dbReference type="ChEBI" id="CHEBI:15378"/>
        <dbReference type="ChEBI" id="CHEBI:57540"/>
        <dbReference type="ChEBI" id="CHEBI:57597"/>
        <dbReference type="ChEBI" id="CHEBI:57642"/>
        <dbReference type="ChEBI" id="CHEBI:57945"/>
        <dbReference type="EC" id="1.1.1.94"/>
    </reaction>
    <physiologicalReaction direction="right-to-left" evidence="1">
        <dbReference type="Rhea" id="RHEA:11094"/>
    </physiologicalReaction>
</comment>
<comment type="catalytic activity">
    <reaction evidence="1">
        <text>sn-glycerol 3-phosphate + NADP(+) = dihydroxyacetone phosphate + NADPH + H(+)</text>
        <dbReference type="Rhea" id="RHEA:11096"/>
        <dbReference type="ChEBI" id="CHEBI:15378"/>
        <dbReference type="ChEBI" id="CHEBI:57597"/>
        <dbReference type="ChEBI" id="CHEBI:57642"/>
        <dbReference type="ChEBI" id="CHEBI:57783"/>
        <dbReference type="ChEBI" id="CHEBI:58349"/>
        <dbReference type="EC" id="1.1.1.94"/>
    </reaction>
    <physiologicalReaction direction="right-to-left" evidence="1">
        <dbReference type="Rhea" id="RHEA:11098"/>
    </physiologicalReaction>
</comment>
<comment type="pathway">
    <text evidence="1">Membrane lipid metabolism; glycerophospholipid metabolism.</text>
</comment>
<comment type="subcellular location">
    <subcellularLocation>
        <location evidence="1">Cytoplasm</location>
    </subcellularLocation>
</comment>
<comment type="similarity">
    <text evidence="1">Belongs to the NAD-dependent glycerol-3-phosphate dehydrogenase family.</text>
</comment>
<gene>
    <name evidence="1" type="primary">gpsA</name>
    <name type="synonym">gpdA</name>
    <name type="ordered locus">XCC0204</name>
</gene>
<feature type="chain" id="PRO_0000138062" description="Glycerol-3-phosphate dehydrogenase [NAD(P)+]">
    <location>
        <begin position="1"/>
        <end position="341"/>
    </location>
</feature>
<feature type="active site" description="Proton acceptor" evidence="1">
    <location>
        <position position="194"/>
    </location>
</feature>
<feature type="binding site" evidence="1">
    <location>
        <position position="15"/>
    </location>
    <ligand>
        <name>NADPH</name>
        <dbReference type="ChEBI" id="CHEBI:57783"/>
    </ligand>
</feature>
<feature type="binding site" evidence="1">
    <location>
        <position position="16"/>
    </location>
    <ligand>
        <name>NADPH</name>
        <dbReference type="ChEBI" id="CHEBI:57783"/>
    </ligand>
</feature>
<feature type="binding site" evidence="1">
    <location>
        <position position="36"/>
    </location>
    <ligand>
        <name>NADPH</name>
        <dbReference type="ChEBI" id="CHEBI:57783"/>
    </ligand>
</feature>
<feature type="binding site" evidence="1">
    <location>
        <position position="110"/>
    </location>
    <ligand>
        <name>NADPH</name>
        <dbReference type="ChEBI" id="CHEBI:57783"/>
    </ligand>
</feature>
<feature type="binding site" evidence="1">
    <location>
        <position position="110"/>
    </location>
    <ligand>
        <name>sn-glycerol 3-phosphate</name>
        <dbReference type="ChEBI" id="CHEBI:57597"/>
    </ligand>
</feature>
<feature type="binding site" evidence="1">
    <location>
        <position position="139"/>
    </location>
    <ligand>
        <name>sn-glycerol 3-phosphate</name>
        <dbReference type="ChEBI" id="CHEBI:57597"/>
    </ligand>
</feature>
<feature type="binding site" evidence="1">
    <location>
        <position position="141"/>
    </location>
    <ligand>
        <name>sn-glycerol 3-phosphate</name>
        <dbReference type="ChEBI" id="CHEBI:57597"/>
    </ligand>
</feature>
<feature type="binding site" evidence="1">
    <location>
        <position position="143"/>
    </location>
    <ligand>
        <name>NADPH</name>
        <dbReference type="ChEBI" id="CHEBI:57783"/>
    </ligand>
</feature>
<feature type="binding site" evidence="1">
    <location>
        <position position="194"/>
    </location>
    <ligand>
        <name>sn-glycerol 3-phosphate</name>
        <dbReference type="ChEBI" id="CHEBI:57597"/>
    </ligand>
</feature>
<feature type="binding site" evidence="1">
    <location>
        <position position="247"/>
    </location>
    <ligand>
        <name>sn-glycerol 3-phosphate</name>
        <dbReference type="ChEBI" id="CHEBI:57597"/>
    </ligand>
</feature>
<feature type="binding site" evidence="1">
    <location>
        <position position="257"/>
    </location>
    <ligand>
        <name>sn-glycerol 3-phosphate</name>
        <dbReference type="ChEBI" id="CHEBI:57597"/>
    </ligand>
</feature>
<feature type="binding site" evidence="1">
    <location>
        <position position="258"/>
    </location>
    <ligand>
        <name>NADPH</name>
        <dbReference type="ChEBI" id="CHEBI:57783"/>
    </ligand>
</feature>
<feature type="binding site" evidence="1">
    <location>
        <position position="258"/>
    </location>
    <ligand>
        <name>sn-glycerol 3-phosphate</name>
        <dbReference type="ChEBI" id="CHEBI:57597"/>
    </ligand>
</feature>
<feature type="binding site" evidence="1">
    <location>
        <position position="259"/>
    </location>
    <ligand>
        <name>sn-glycerol 3-phosphate</name>
        <dbReference type="ChEBI" id="CHEBI:57597"/>
    </ligand>
</feature>
<feature type="binding site" evidence="1">
    <location>
        <position position="282"/>
    </location>
    <ligand>
        <name>NADPH</name>
        <dbReference type="ChEBI" id="CHEBI:57783"/>
    </ligand>
</feature>
<feature type="binding site" evidence="1">
    <location>
        <position position="284"/>
    </location>
    <ligand>
        <name>NADPH</name>
        <dbReference type="ChEBI" id="CHEBI:57783"/>
    </ligand>
</feature>
<accession>Q8PDY0</accession>
<sequence length="341" mass="35720">MSDPTQKIAVLGAGSWGTALAALVARHGHPTVLWGRDAAMVDAIDRTHENPRYLPGIALPDSLRATTDLQQTIAGASWILVVVPSHAFTETIKLLAPLRPAGAGIAWATKGFEPGSGRFLHEVARDILGPSVPLAVVTGPSFAKEVTLGLPTAITVHGDDAAFAQVVADAMHGPTFRAYTGDDMVGAELGGAMKNVLAVATGVADGMQLGLNARAGLITRGLNEMLRLAAVIGARPETLMGLAGLGDLVLTCTGDLSRNRRLGLALGRGQSLSDAIREIGQVVESVQTADEVMRQAEQHGIELPISNAVRAVLHGEITPEAGLKELLARERKPEYPQTLFT</sequence>
<dbReference type="EC" id="1.1.1.94" evidence="1"/>
<dbReference type="EMBL" id="AE008922">
    <property type="protein sequence ID" value="AAM39523.1"/>
    <property type="molecule type" value="Genomic_DNA"/>
</dbReference>
<dbReference type="RefSeq" id="NP_635599.1">
    <property type="nucleotide sequence ID" value="NC_003902.1"/>
</dbReference>
<dbReference type="RefSeq" id="WP_011035460.1">
    <property type="nucleotide sequence ID" value="NC_003902.1"/>
</dbReference>
<dbReference type="SMR" id="Q8PDY0"/>
<dbReference type="STRING" id="190485.XCC0204"/>
<dbReference type="EnsemblBacteria" id="AAM39523">
    <property type="protein sequence ID" value="AAM39523"/>
    <property type="gene ID" value="XCC0204"/>
</dbReference>
<dbReference type="KEGG" id="xcc:XCC0204"/>
<dbReference type="PATRIC" id="fig|190485.4.peg.230"/>
<dbReference type="eggNOG" id="COG0240">
    <property type="taxonomic scope" value="Bacteria"/>
</dbReference>
<dbReference type="HOGENOM" id="CLU_033449_0_2_6"/>
<dbReference type="OrthoDB" id="9812273at2"/>
<dbReference type="UniPathway" id="UPA00940"/>
<dbReference type="Proteomes" id="UP000001010">
    <property type="component" value="Chromosome"/>
</dbReference>
<dbReference type="GO" id="GO:0005829">
    <property type="term" value="C:cytosol"/>
    <property type="evidence" value="ECO:0000318"/>
    <property type="project" value="GO_Central"/>
</dbReference>
<dbReference type="GO" id="GO:0047952">
    <property type="term" value="F:glycerol-3-phosphate dehydrogenase [NAD(P)+] activity"/>
    <property type="evidence" value="ECO:0000318"/>
    <property type="project" value="GO_Central"/>
</dbReference>
<dbReference type="GO" id="GO:0051287">
    <property type="term" value="F:NAD binding"/>
    <property type="evidence" value="ECO:0007669"/>
    <property type="project" value="InterPro"/>
</dbReference>
<dbReference type="GO" id="GO:0005975">
    <property type="term" value="P:carbohydrate metabolic process"/>
    <property type="evidence" value="ECO:0007669"/>
    <property type="project" value="InterPro"/>
</dbReference>
<dbReference type="GO" id="GO:0046167">
    <property type="term" value="P:glycerol-3-phosphate biosynthetic process"/>
    <property type="evidence" value="ECO:0007669"/>
    <property type="project" value="UniProtKB-UniRule"/>
</dbReference>
<dbReference type="GO" id="GO:0046168">
    <property type="term" value="P:glycerol-3-phosphate catabolic process"/>
    <property type="evidence" value="ECO:0007669"/>
    <property type="project" value="InterPro"/>
</dbReference>
<dbReference type="GO" id="GO:0006072">
    <property type="term" value="P:glycerol-3-phosphate metabolic process"/>
    <property type="evidence" value="ECO:0000318"/>
    <property type="project" value="GO_Central"/>
</dbReference>
<dbReference type="GO" id="GO:0046474">
    <property type="term" value="P:glycerophospholipid biosynthetic process"/>
    <property type="evidence" value="ECO:0000318"/>
    <property type="project" value="GO_Central"/>
</dbReference>
<dbReference type="FunFam" id="1.10.1040.10:FF:000001">
    <property type="entry name" value="Glycerol-3-phosphate dehydrogenase [NAD(P)+]"/>
    <property type="match status" value="1"/>
</dbReference>
<dbReference type="FunFam" id="3.40.50.720:FF:000019">
    <property type="entry name" value="Glycerol-3-phosphate dehydrogenase [NAD(P)+]"/>
    <property type="match status" value="1"/>
</dbReference>
<dbReference type="Gene3D" id="1.10.1040.10">
    <property type="entry name" value="N-(1-d-carboxylethyl)-l-norvaline Dehydrogenase, domain 2"/>
    <property type="match status" value="1"/>
</dbReference>
<dbReference type="Gene3D" id="3.40.50.720">
    <property type="entry name" value="NAD(P)-binding Rossmann-like Domain"/>
    <property type="match status" value="1"/>
</dbReference>
<dbReference type="HAMAP" id="MF_00394">
    <property type="entry name" value="NAD_Glyc3P_dehydrog"/>
    <property type="match status" value="1"/>
</dbReference>
<dbReference type="InterPro" id="IPR008927">
    <property type="entry name" value="6-PGluconate_DH-like_C_sf"/>
</dbReference>
<dbReference type="InterPro" id="IPR013328">
    <property type="entry name" value="6PGD_dom2"/>
</dbReference>
<dbReference type="InterPro" id="IPR006168">
    <property type="entry name" value="G3P_DH_NAD-dep"/>
</dbReference>
<dbReference type="InterPro" id="IPR006109">
    <property type="entry name" value="G3P_DH_NAD-dep_C"/>
</dbReference>
<dbReference type="InterPro" id="IPR011128">
    <property type="entry name" value="G3P_DH_NAD-dep_N"/>
</dbReference>
<dbReference type="InterPro" id="IPR036291">
    <property type="entry name" value="NAD(P)-bd_dom_sf"/>
</dbReference>
<dbReference type="NCBIfam" id="NF000940">
    <property type="entry name" value="PRK00094.1-2"/>
    <property type="match status" value="1"/>
</dbReference>
<dbReference type="NCBIfam" id="NF000942">
    <property type="entry name" value="PRK00094.1-4"/>
    <property type="match status" value="1"/>
</dbReference>
<dbReference type="PANTHER" id="PTHR11728">
    <property type="entry name" value="GLYCEROL-3-PHOSPHATE DEHYDROGENASE"/>
    <property type="match status" value="1"/>
</dbReference>
<dbReference type="PANTHER" id="PTHR11728:SF1">
    <property type="entry name" value="GLYCEROL-3-PHOSPHATE DEHYDROGENASE [NAD(+)] 2, CHLOROPLASTIC"/>
    <property type="match status" value="1"/>
</dbReference>
<dbReference type="Pfam" id="PF07479">
    <property type="entry name" value="NAD_Gly3P_dh_C"/>
    <property type="match status" value="1"/>
</dbReference>
<dbReference type="Pfam" id="PF01210">
    <property type="entry name" value="NAD_Gly3P_dh_N"/>
    <property type="match status" value="1"/>
</dbReference>
<dbReference type="PIRSF" id="PIRSF000114">
    <property type="entry name" value="Glycerol-3-P_dh"/>
    <property type="match status" value="1"/>
</dbReference>
<dbReference type="PRINTS" id="PR00077">
    <property type="entry name" value="GPDHDRGNASE"/>
</dbReference>
<dbReference type="SUPFAM" id="SSF48179">
    <property type="entry name" value="6-phosphogluconate dehydrogenase C-terminal domain-like"/>
    <property type="match status" value="1"/>
</dbReference>
<dbReference type="SUPFAM" id="SSF51735">
    <property type="entry name" value="NAD(P)-binding Rossmann-fold domains"/>
    <property type="match status" value="1"/>
</dbReference>
<dbReference type="PROSITE" id="PS00957">
    <property type="entry name" value="NAD_G3PDH"/>
    <property type="match status" value="1"/>
</dbReference>